<comment type="function">
    <text evidence="6 9 15">Plays a role in mitotic exit and cytokinesis (PubMed:16198290, PubMed:17853893). Recruits PDCD6IP and TSG101 to midbody during cytokinesis. Required for successful completion of cytokinesis (PubMed:17853893). Not required for microtubule nucleation (PubMed:16198290). Plays a role in the development of the brain and kidney (PubMed:28264986).</text>
</comment>
<comment type="subunit">
    <text evidence="6 7 8 9 11 12 14">Homodimer (PubMed:16406728). Interacts (phosphorylated on Ser-425 and Ser-428) with PLK1; the interaction is indirect via the MTMR3:MTMR4 heterooligomer, occurs during early mitosis, regulates the phosphorylation of CEP55 by PLK1 and its recruitment to the midbody where it can mediate cell abscission (PubMed:16198290, PubMed:25659891). Interacts with AKAP9/CG-NAP; the interaction occurs in interphase and is lost upon mitotic entry (PubMed:16198290). Interacts with PCNT/Kendrin; the interaction occurs in interphase and is lost upon mitotic entry (PubMed:16198290). Directly interacts with PDCD6IP; this interaction is required for PDCD6IP targeting to the midbody; CEP55 binds PDCD6IP in a 2:1 stoichiometry; PDCD6IP competes with TSG101 for the same binding site (PubMed:17556548, PubMed:17853893, PubMed:18641129, PubMed:18948538). Interacts with TSG101; TSG101 competes with PDCD6IP for the same binding site; interaction is required for cytokinesis but not for viral budding (PubMed:17556548, PubMed:17853893, PubMed:18948538). Interacts with MVB12A, VPS37B, VPS37C and VPS28 (PubMed:17853893).</text>
</comment>
<comment type="interaction">
    <interactant intactId="EBI-747776">
        <id>Q53EZ4</id>
    </interactant>
    <interactant intactId="EBI-8643161">
        <id>Q9NX04</id>
        <label>AIRIM</label>
    </interactant>
    <organismsDiffer>false</organismsDiffer>
    <experiments>6</experiments>
</comment>
<comment type="interaction">
    <interactant intactId="EBI-747776">
        <id>Q53EZ4</id>
    </interactant>
    <interactant intactId="EBI-715243">
        <id>P50995</id>
        <label>ANXA11</label>
    </interactant>
    <organismsDiffer>false</organismsDiffer>
    <experiments>8</experiments>
</comment>
<comment type="interaction">
    <interactant intactId="EBI-747776">
        <id>Q53EZ4</id>
    </interactant>
    <interactant intactId="EBI-10245225">
        <id>Q5T0G8</id>
        <label>ANXA11</label>
    </interactant>
    <organismsDiffer>false</organismsDiffer>
    <experiments>3</experiments>
</comment>
<comment type="interaction">
    <interactant intactId="EBI-747776">
        <id>Q53EZ4</id>
    </interactant>
    <interactant intactId="EBI-740691">
        <id>O94989</id>
        <label>ARHGEF15</label>
    </interactant>
    <organismsDiffer>false</organismsDiffer>
    <experiments>9</experiments>
</comment>
<comment type="interaction">
    <interactant intactId="EBI-747776">
        <id>Q53EZ4</id>
    </interactant>
    <interactant intactId="EBI-747505">
        <id>Q8TAB5</id>
        <label>C1orf216</label>
    </interactant>
    <organismsDiffer>false</organismsDiffer>
    <experiments>3</experiments>
</comment>
<comment type="interaction">
    <interactant intactId="EBI-747776">
        <id>Q53EZ4</id>
    </interactant>
    <interactant intactId="EBI-745541">
        <id>Q8N187</id>
        <label>CARF</label>
    </interactant>
    <organismsDiffer>false</organismsDiffer>
    <experiments>3</experiments>
</comment>
<comment type="interaction">
    <interactant intactId="EBI-747776">
        <id>Q53EZ4</id>
    </interactant>
    <interactant intactId="EBI-11524851">
        <id>Q8NA61-2</id>
        <label>CBY2</label>
    </interactant>
    <organismsDiffer>false</organismsDiffer>
    <experiments>3</experiments>
</comment>
<comment type="interaction">
    <interactant intactId="EBI-747776">
        <id>Q53EZ4</id>
    </interactant>
    <interactant intactId="EBI-3923278">
        <id>Q6UXH8</id>
        <label>CCBE1</label>
    </interactant>
    <organismsDiffer>false</organismsDiffer>
    <experiments>3</experiments>
</comment>
<comment type="interaction">
    <interactant intactId="EBI-747776">
        <id>Q53EZ4</id>
    </interactant>
    <interactant intactId="EBI-12013534">
        <id>Q6UXH8-3</id>
        <label>CCBE1</label>
    </interactant>
    <organismsDiffer>false</organismsDiffer>
    <experiments>3</experiments>
</comment>
<comment type="interaction">
    <interactant intactId="EBI-747776">
        <id>Q53EZ4</id>
    </interactant>
    <interactant intactId="EBI-744556">
        <id>Q96HB5</id>
        <label>CCDC120</label>
    </interactant>
    <organismsDiffer>false</organismsDiffer>
    <experiments>3</experiments>
</comment>
<comment type="interaction">
    <interactant intactId="EBI-747776">
        <id>Q53EZ4</id>
    </interactant>
    <interactant intactId="EBI-10175300">
        <id>Q8TD31-3</id>
        <label>CCHCR1</label>
    </interactant>
    <organismsDiffer>false</organismsDiffer>
    <experiments>6</experiments>
</comment>
<comment type="interaction">
    <interactant intactId="EBI-747776">
        <id>Q53EZ4</id>
    </interactant>
    <interactant intactId="EBI-295634">
        <id>Q16543</id>
        <label>CDC37</label>
    </interactant>
    <organismsDiffer>false</organismsDiffer>
    <experiments>3</experiments>
</comment>
<comment type="interaction">
    <interactant intactId="EBI-747776">
        <id>Q53EZ4</id>
    </interactant>
    <interactant intactId="EBI-374969">
        <id>O75419</id>
        <label>CDC45</label>
    </interactant>
    <organismsDiffer>false</organismsDiffer>
    <experiments>7</experiments>
</comment>
<comment type="interaction">
    <interactant intactId="EBI-747776">
        <id>Q53EZ4</id>
    </interactant>
    <interactant intactId="EBI-747776">
        <id>Q53EZ4</id>
        <label>CEP55</label>
    </interactant>
    <organismsDiffer>false</organismsDiffer>
    <experiments>3</experiments>
</comment>
<comment type="interaction">
    <interactant intactId="EBI-747776">
        <id>Q53EZ4</id>
    </interactant>
    <interactant intactId="EBI-1104570">
        <id>Q8IYX8</id>
        <label>CEP57L1</label>
    </interactant>
    <organismsDiffer>false</organismsDiffer>
    <experiments>4</experiments>
</comment>
<comment type="interaction">
    <interactant intactId="EBI-747776">
        <id>Q53EZ4</id>
    </interactant>
    <interactant intactId="EBI-10181988">
        <id>Q8IYX8-2</id>
        <label>CEP57L1</label>
    </interactant>
    <organismsDiffer>false</organismsDiffer>
    <experiments>3</experiments>
</comment>
<comment type="interaction">
    <interactant intactId="EBI-747776">
        <id>Q53EZ4</id>
    </interactant>
    <interactant intactId="EBI-349854">
        <id>P13569</id>
        <label>CFTR</label>
    </interactant>
    <organismsDiffer>false</organismsDiffer>
    <experiments>5</experiments>
</comment>
<comment type="interaction">
    <interactant intactId="EBI-747776">
        <id>Q53EZ4</id>
    </interactant>
    <interactant intactId="EBI-747133">
        <id>P27658</id>
        <label>COL8A1</label>
    </interactant>
    <organismsDiffer>false</organismsDiffer>
    <experiments>3</experiments>
</comment>
<comment type="interaction">
    <interactant intactId="EBI-747776">
        <id>Q53EZ4</id>
    </interactant>
    <interactant intactId="EBI-10968534">
        <id>P50570-2</id>
        <label>DNM2</label>
    </interactant>
    <organismsDiffer>false</organismsDiffer>
    <experiments>3</experiments>
</comment>
<comment type="interaction">
    <interactant intactId="EBI-747776">
        <id>Q53EZ4</id>
    </interactant>
    <interactant intactId="EBI-740402">
        <id>O60941</id>
        <label>DTNB</label>
    </interactant>
    <organismsDiffer>false</organismsDiffer>
    <experiments>3</experiments>
</comment>
<comment type="interaction">
    <interactant intactId="EBI-747776">
        <id>Q53EZ4</id>
    </interactant>
    <interactant intactId="EBI-11984733">
        <id>O60941-5</id>
        <label>DTNB</label>
    </interactant>
    <organismsDiffer>false</organismsDiffer>
    <experiments>3</experiments>
</comment>
<comment type="interaction">
    <interactant intactId="EBI-747776">
        <id>Q53EZ4</id>
    </interactant>
    <interactant intactId="EBI-750700">
        <id>Q8N9N8</id>
        <label>EIF1AD</label>
    </interactant>
    <organismsDiffer>false</organismsDiffer>
    <experiments>5</experiments>
</comment>
<comment type="interaction">
    <interactant intactId="EBI-747776">
        <id>Q53EZ4</id>
    </interactant>
    <interactant intactId="EBI-744099">
        <id>Q9H0I2</id>
        <label>ENKD1</label>
    </interactant>
    <organismsDiffer>false</organismsDiffer>
    <experiments>3</experiments>
</comment>
<comment type="interaction">
    <interactant intactId="EBI-747776">
        <id>Q53EZ4</id>
    </interactant>
    <interactant intactId="EBI-7225287">
        <id>Q96MY7</id>
        <label>FAM161B</label>
    </interactant>
    <organismsDiffer>false</organismsDiffer>
    <experiments>3</experiments>
</comment>
<comment type="interaction">
    <interactant intactId="EBI-747776">
        <id>Q53EZ4</id>
    </interactant>
    <interactant intactId="EBI-6658203">
        <id>Q86YD7</id>
        <label>FAM90A1</label>
    </interactant>
    <organismsDiffer>false</organismsDiffer>
    <experiments>6</experiments>
</comment>
<comment type="interaction">
    <interactant intactId="EBI-747776">
        <id>Q53EZ4</id>
    </interactant>
    <interactant intactId="EBI-10244131">
        <id>Q8TES7-6</id>
        <label>FBF1</label>
    </interactant>
    <organismsDiffer>false</organismsDiffer>
    <experiments>3</experiments>
</comment>
<comment type="interaction">
    <interactant intactId="EBI-747776">
        <id>Q53EZ4</id>
    </interactant>
    <interactant intactId="EBI-740459">
        <id>P51116</id>
        <label>FXR2</label>
    </interactant>
    <organismsDiffer>false</organismsDiffer>
    <experiments>3</experiments>
</comment>
<comment type="interaction">
    <interactant intactId="EBI-747776">
        <id>Q53EZ4</id>
    </interactant>
    <interactant intactId="EBI-11110431">
        <id>Q8TB36</id>
        <label>GDAP1</label>
    </interactant>
    <organismsDiffer>false</organismsDiffer>
    <experiments>3</experiments>
</comment>
<comment type="interaction">
    <interactant intactId="EBI-747776">
        <id>Q53EZ4</id>
    </interactant>
    <interactant intactId="EBI-10181276">
        <id>Q0D2H9</id>
        <label>GOLGA8DP</label>
    </interactant>
    <organismsDiffer>false</organismsDiffer>
    <experiments>3</experiments>
</comment>
<comment type="interaction">
    <interactant intactId="EBI-747776">
        <id>Q53EZ4</id>
    </interactant>
    <interactant intactId="EBI-2514791">
        <id>Q96CS2</id>
        <label>HAUS1</label>
    </interactant>
    <organismsDiffer>false</organismsDiffer>
    <experiments>3</experiments>
</comment>
<comment type="interaction">
    <interactant intactId="EBI-747776">
        <id>Q53EZ4</id>
    </interactant>
    <interactant intactId="EBI-740220">
        <id>O14964</id>
        <label>HGS</label>
    </interactant>
    <organismsDiffer>false</organismsDiffer>
    <experiments>5</experiments>
</comment>
<comment type="interaction">
    <interactant intactId="EBI-747776">
        <id>Q53EZ4</id>
    </interactant>
    <interactant intactId="EBI-7116203">
        <id>O75031</id>
        <label>HSF2BP</label>
    </interactant>
    <organismsDiffer>false</organismsDiffer>
    <experiments>3</experiments>
</comment>
<comment type="interaction">
    <interactant intactId="EBI-747776">
        <id>Q53EZ4</id>
    </interactant>
    <interactant intactId="EBI-466029">
        <id>P42858</id>
        <label>HTT</label>
    </interactant>
    <organismsDiffer>false</organismsDiffer>
    <experiments>9</experiments>
</comment>
<comment type="interaction">
    <interactant intactId="EBI-747776">
        <id>Q53EZ4</id>
    </interactant>
    <interactant intactId="EBI-2556193">
        <id>Q63ZY3</id>
        <label>KANK2</label>
    </interactant>
    <organismsDiffer>false</organismsDiffer>
    <experiments>3</experiments>
</comment>
<comment type="interaction">
    <interactant intactId="EBI-747776">
        <id>Q53EZ4</id>
    </interactant>
    <interactant intactId="EBI-2125614">
        <id>Q9BVG8</id>
        <label>KIFC3</label>
    </interactant>
    <organismsDiffer>false</organismsDiffer>
    <experiments>3</experiments>
</comment>
<comment type="interaction">
    <interactant intactId="EBI-747776">
        <id>Q53EZ4</id>
    </interactant>
    <interactant intactId="EBI-14069005">
        <id>Q9BVG8-5</id>
        <label>KIFC3</label>
    </interactant>
    <organismsDiffer>false</organismsDiffer>
    <experiments>3</experiments>
</comment>
<comment type="interaction">
    <interactant intactId="EBI-747776">
        <id>Q53EZ4</id>
    </interactant>
    <interactant intactId="EBI-948266">
        <id>O14901</id>
        <label>KLF11</label>
    </interactant>
    <organismsDiffer>false</organismsDiffer>
    <experiments>3</experiments>
</comment>
<comment type="interaction">
    <interactant intactId="EBI-747776">
        <id>Q53EZ4</id>
    </interactant>
    <interactant intactId="EBI-720805">
        <id>P56470</id>
        <label>LGALS4</label>
    </interactant>
    <organismsDiffer>false</organismsDiffer>
    <experiments>3</experiments>
</comment>
<comment type="interaction">
    <interactant intactId="EBI-747776">
        <id>Q53EZ4</id>
    </interactant>
    <interactant intactId="EBI-13435308">
        <id>Q53EV4</id>
        <label>LRRC23</label>
    </interactant>
    <organismsDiffer>false</organismsDiffer>
    <experiments>3</experiments>
</comment>
<comment type="interaction">
    <interactant intactId="EBI-747776">
        <id>Q53EZ4</id>
    </interactant>
    <interactant intactId="EBI-741424">
        <id>Q8NDC0</id>
        <label>MAPK1IP1L</label>
    </interactant>
    <organismsDiffer>false</organismsDiffer>
    <experiments>3</experiments>
</comment>
<comment type="interaction">
    <interactant intactId="EBI-747776">
        <id>Q53EZ4</id>
    </interactant>
    <interactant intactId="EBI-1048159">
        <id>P55081</id>
        <label>MFAP1</label>
    </interactant>
    <organismsDiffer>false</organismsDiffer>
    <experiments>6</experiments>
</comment>
<comment type="interaction">
    <interactant intactId="EBI-747776">
        <id>Q53EZ4</id>
    </interactant>
    <interactant intactId="EBI-10244342">
        <id>Q5JRA6-2</id>
        <label>MIA3</label>
    </interactant>
    <organismsDiffer>false</organismsDiffer>
    <experiments>4</experiments>
</comment>
<comment type="interaction">
    <interactant intactId="EBI-747776">
        <id>Q53EZ4</id>
    </interactant>
    <interactant intactId="EBI-399257">
        <id>Q15014</id>
        <label>MORF4L2</label>
    </interactant>
    <organismsDiffer>false</organismsDiffer>
    <experiments>6</experiments>
</comment>
<comment type="interaction">
    <interactant intactId="EBI-747776">
        <id>Q53EZ4</id>
    </interactant>
    <interactant intactId="EBI-741158">
        <id>Q96HA8</id>
        <label>NTAQ1</label>
    </interactant>
    <organismsDiffer>false</organismsDiffer>
    <experiments>5</experiments>
</comment>
<comment type="interaction">
    <interactant intactId="EBI-747776">
        <id>Q53EZ4</id>
    </interactant>
    <interactant intactId="EBI-310624">
        <id>Q8WUM4</id>
        <label>PDCD6IP</label>
    </interactant>
    <organismsDiffer>false</organismsDiffer>
    <experiments>22</experiments>
</comment>
<comment type="interaction">
    <interactant intactId="EBI-747776">
        <id>Q53EZ4</id>
    </interactant>
    <interactant intactId="EBI-724639">
        <id>Q9UBV8</id>
        <label>PEF1</label>
    </interactant>
    <organismsDiffer>false</organismsDiffer>
    <experiments>6</experiments>
</comment>
<comment type="interaction">
    <interactant intactId="EBI-747776">
        <id>Q53EZ4</id>
    </interactant>
    <interactant intactId="EBI-714158">
        <id>Q13526</id>
        <label>PIN1</label>
    </interactant>
    <organismsDiffer>false</organismsDiffer>
    <experiments>3</experiments>
</comment>
<comment type="interaction">
    <interactant intactId="EBI-747776">
        <id>Q53EZ4</id>
    </interactant>
    <interactant intactId="EBI-10240979">
        <id>Q3KR16</id>
        <label>PLEKHG6</label>
    </interactant>
    <organismsDiffer>false</organismsDiffer>
    <experiments>8</experiments>
</comment>
<comment type="interaction">
    <interactant intactId="EBI-747776">
        <id>Q53EZ4</id>
    </interactant>
    <interactant intactId="EBI-10253863">
        <id>Q6PIY2</id>
        <label>POLM</label>
    </interactant>
    <organismsDiffer>false</organismsDiffer>
    <experiments>6</experiments>
</comment>
<comment type="interaction">
    <interactant intactId="EBI-747776">
        <id>Q53EZ4</id>
    </interactant>
    <interactant intactId="EBI-10293968">
        <id>Q96T49</id>
        <label>PPP1R16B</label>
    </interactant>
    <organismsDiffer>false</organismsDiffer>
    <experiments>5</experiments>
</comment>
<comment type="interaction">
    <interactant intactId="EBI-747776">
        <id>Q53EZ4</id>
    </interactant>
    <interactant intactId="EBI-724478">
        <id>Q9H3S7</id>
        <label>PTPN23</label>
    </interactant>
    <organismsDiffer>false</organismsDiffer>
    <experiments>3</experiments>
</comment>
<comment type="interaction">
    <interactant intactId="EBI-747776">
        <id>Q53EZ4</id>
    </interactant>
    <interactant intactId="EBI-10239402">
        <id>Q2TAK8-2</id>
        <label>PWWP3A</label>
    </interactant>
    <organismsDiffer>false</organismsDiffer>
    <experiments>3</experiments>
</comment>
<comment type="interaction">
    <interactant intactId="EBI-747776">
        <id>Q53EZ4</id>
    </interactant>
    <interactant intactId="EBI-740272">
        <id>Q96I25</id>
        <label>RBM17</label>
    </interactant>
    <organismsDiffer>false</organismsDiffer>
    <experiments>8</experiments>
</comment>
<comment type="interaction">
    <interactant intactId="EBI-747776">
        <id>Q53EZ4</id>
    </interactant>
    <interactant intactId="EBI-2602260">
        <id>Q9NW64</id>
        <label>RBM22</label>
    </interactant>
    <organismsDiffer>false</organismsDiffer>
    <experiments>6</experiments>
</comment>
<comment type="interaction">
    <interactant intactId="EBI-747776">
        <id>Q53EZ4</id>
    </interactant>
    <interactant intactId="EBI-743428">
        <id>Q9P2K3</id>
        <label>RCOR3</label>
    </interactant>
    <organismsDiffer>false</organismsDiffer>
    <experiments>3</experiments>
</comment>
<comment type="interaction">
    <interactant intactId="EBI-747776">
        <id>Q53EZ4</id>
    </interactant>
    <interactant intactId="EBI-727004">
        <id>O00560</id>
        <label>SDCBP</label>
    </interactant>
    <organismsDiffer>false</organismsDiffer>
    <experiments>6</experiments>
</comment>
<comment type="interaction">
    <interactant intactId="EBI-747776">
        <id>Q53EZ4</id>
    </interactant>
    <interactant intactId="EBI-372475">
        <id>P14678-2</id>
        <label>SNRPB</label>
    </interactant>
    <organismsDiffer>false</organismsDiffer>
    <experiments>3</experiments>
</comment>
<comment type="interaction">
    <interactant intactId="EBI-747776">
        <id>Q53EZ4</id>
    </interactant>
    <interactant intactId="EBI-632715">
        <id>Q13573</id>
        <label>SNW1</label>
    </interactant>
    <organismsDiffer>false</organismsDiffer>
    <experiments>3</experiments>
</comment>
<comment type="interaction">
    <interactant intactId="EBI-747776">
        <id>Q53EZ4</id>
    </interactant>
    <interactant intactId="EBI-12035119">
        <id>O75177-5</id>
        <label>SS18L1</label>
    </interactant>
    <organismsDiffer>false</organismsDiffer>
    <experiments>3</experiments>
</comment>
<comment type="interaction">
    <interactant intactId="EBI-747776">
        <id>Q53EZ4</id>
    </interactant>
    <interactant intactId="EBI-2212028">
        <id>Q9Y2D8</id>
        <label>SSX2IP</label>
    </interactant>
    <organismsDiffer>false</organismsDiffer>
    <experiments>5</experiments>
</comment>
<comment type="interaction">
    <interactant intactId="EBI-747776">
        <id>Q53EZ4</id>
    </interactant>
    <interactant intactId="EBI-2554984">
        <id>Q9Y6A5</id>
        <label>TACC3</label>
    </interactant>
    <organismsDiffer>false</organismsDiffer>
    <experiments>3</experiments>
</comment>
<comment type="interaction">
    <interactant intactId="EBI-747776">
        <id>Q53EZ4</id>
    </interactant>
    <interactant intactId="EBI-749995">
        <id>P56279</id>
        <label>TCL1A</label>
    </interactant>
    <organismsDiffer>false</organismsDiffer>
    <experiments>6</experiments>
</comment>
<comment type="interaction">
    <interactant intactId="EBI-747776">
        <id>Q53EZ4</id>
    </interactant>
    <interactant intactId="EBI-10176734">
        <id>D3DUQ6</id>
        <label>TEAD4</label>
    </interactant>
    <organismsDiffer>false</organismsDiffer>
    <experiments>3</experiments>
</comment>
<comment type="interaction">
    <interactant intactId="EBI-747776">
        <id>Q53EZ4</id>
    </interactant>
    <interactant intactId="EBI-747736">
        <id>Q15561</id>
        <label>TEAD4</label>
    </interactant>
    <organismsDiffer>false</organismsDiffer>
    <experiments>5</experiments>
</comment>
<comment type="interaction">
    <interactant intactId="EBI-747776">
        <id>Q53EZ4</id>
    </interactant>
    <interactant intactId="EBI-6674697">
        <id>Q8IWB6</id>
        <label>TEX14</label>
    </interactant>
    <organismsDiffer>false</organismsDiffer>
    <experiments>5</experiments>
</comment>
<comment type="interaction">
    <interactant intactId="EBI-747776">
        <id>Q53EZ4</id>
    </interactant>
    <interactant intactId="EBI-357061">
        <id>Q92734</id>
        <label>TFG</label>
    </interactant>
    <organismsDiffer>false</organismsDiffer>
    <experiments>6</experiments>
</comment>
<comment type="interaction">
    <interactant intactId="EBI-747776">
        <id>Q53EZ4</id>
    </interactant>
    <interactant intactId="EBI-25847109">
        <id>O14656-2</id>
        <label>TOR1A</label>
    </interactant>
    <organismsDiffer>false</organismsDiffer>
    <experiments>3</experiments>
</comment>
<comment type="interaction">
    <interactant intactId="EBI-747776">
        <id>Q53EZ4</id>
    </interactant>
    <interactant intactId="EBI-11952721">
        <id>Q05BL1</id>
        <label>TP53BP2</label>
    </interactant>
    <organismsDiffer>false</organismsDiffer>
    <experiments>3</experiments>
</comment>
<comment type="interaction">
    <interactant intactId="EBI-747776">
        <id>Q53EZ4</id>
    </interactant>
    <interactant intactId="EBI-2800203">
        <id>O14773</id>
        <label>TPP1</label>
    </interactant>
    <organismsDiffer>false</organismsDiffer>
    <experiments>3</experiments>
</comment>
<comment type="interaction">
    <interactant intactId="EBI-747776">
        <id>Q53EZ4</id>
    </interactant>
    <interactant intactId="EBI-346882">
        <id>Q99816</id>
        <label>TSG101</label>
    </interactant>
    <organismsDiffer>false</organismsDiffer>
    <experiments>26</experiments>
</comment>
<comment type="interaction">
    <interactant intactId="EBI-747776">
        <id>Q53EZ4</id>
    </interactant>
    <interactant intactId="EBI-2559305">
        <id>A5D8V6</id>
        <label>VPS37C</label>
    </interactant>
    <organismsDiffer>false</organismsDiffer>
    <experiments>8</experiments>
</comment>
<comment type="interaction">
    <interactant intactId="EBI-747776">
        <id>Q53EZ4</id>
    </interactant>
    <interactant intactId="EBI-712969">
        <id>Q9Y3C0</id>
        <label>WASHC3</label>
    </interactant>
    <organismsDiffer>false</organismsDiffer>
    <experiments>7</experiments>
</comment>
<comment type="interaction">
    <interactant intactId="EBI-747776">
        <id>Q53EZ4</id>
    </interactant>
    <interactant intactId="EBI-12006434">
        <id>Q96MX3</id>
        <label>ZNF48</label>
    </interactant>
    <organismsDiffer>false</organismsDiffer>
    <experiments>3</experiments>
</comment>
<comment type="interaction">
    <interactant intactId="EBI-747776">
        <id>Q53EZ4</id>
    </interactant>
    <interactant intactId="EBI-10174800">
        <id>A8K9C1</id>
    </interactant>
    <organismsDiffer>false</organismsDiffer>
    <experiments>3</experiments>
</comment>
<comment type="subcellular location">
    <subcellularLocation>
        <location evidence="15">Cytoplasm</location>
    </subcellularLocation>
    <subcellularLocation>
        <location evidence="6">Cytoplasm</location>
        <location evidence="6">Cytoskeleton</location>
        <location evidence="6">Microtubule organizing center</location>
        <location evidence="6">Centrosome</location>
        <location evidence="6">Centriole</location>
    </subcellularLocation>
    <subcellularLocation>
        <location evidence="6">Cytoplasm</location>
        <location evidence="6">Cytoskeleton</location>
        <location evidence="6">Microtubule organizing center</location>
        <location evidence="6">Centrosome</location>
    </subcellularLocation>
    <subcellularLocation>
        <location evidence="6">Cleavage furrow</location>
    </subcellularLocation>
    <subcellularLocation>
        <location evidence="6 9 11 13 15">Midbody</location>
        <location evidence="6 9 11 13 15">Midbody ring</location>
    </subcellularLocation>
    <text evidence="6">Present at the centrosomes at interphase. A small portion is associated preferentially with the mother centriole, whereas the majority localizes to the pericentriolar material. During mitosis, loses affinity for the centrosome at the onset of prophase and diffuses throughout the cell. This dissociation from the centrosome is phosphorylation-dependent. May remain localized at the centrosome during mitosis in certain cell types. Appears at the cleavage furrow in late anaphase and in the midbody in cytokinesis.</text>
</comment>
<comment type="alternative products">
    <event type="alternative splicing"/>
    <isoform>
        <id>Q53EZ4-1</id>
        <name>1</name>
        <sequence type="displayed"/>
    </isoform>
    <isoform>
        <id>Q53EZ4-2</id>
        <name>2</name>
        <sequence type="described" ref="VSP_014750 VSP_014751"/>
    </isoform>
</comment>
<comment type="tissue specificity">
    <text evidence="6 7 15 16">Expressed in embryonic brain (PubMed:28264986). Expressed in fetal brain ganglionic eminence, kidney tubules and multinucleate neurons in the temporal cortex (PubMed:28264986). Expressed in adult brain, cerebellum, kidney tubules, intestine and muscles (at protein level) (PubMed:28264986, PubMed:28295209). Widely expressed, mostly in proliferative tissues. Highly expressed in testis. Intermediate levels in adult and fetal thymus, as well as in various cancer cell lines. Low levels in different parts of the digestive tract, bone marrow, lymph nodes, placenta, fetal heart and fetal spleen. Hardly detected in brain.</text>
</comment>
<comment type="PTM">
    <text evidence="6">There is a hierachy of phosphorylation, where both Ser-425 and Ser-428 are phosphorylated at the onset of mitosis, prior to Ser-436. Phosphorylation at Ser-425 and Ser-428 is required for dissociation from the centrosome at the G2/M boundary. Phosphorylation at the 3 sites, Ser-425, Ser-428 and Ser-436, is required for protein function at the final stages of cell division to complete cytokinesis successfully.</text>
</comment>
<comment type="disease" evidence="15 16">
    <disease id="DI-05054">
        <name>Multinucleated neurons, anhydramnios, renal dysplasia, cerebellar hypoplasia and hydranencephaly</name>
        <acronym>MARCH</acronym>
        <description>An autosomal recessive, congenital disease characterized by severe hydranencephaly with multinucleated neurons, renal aplasia or dysplasia, and hypoplastic kidneys. Hydranencephaly is an anomaly leading to replacement of the cerebral hemispheres with a fluid-filled cyst. MARCH results in death in utero or in the perinatal period.</description>
        <dbReference type="MIM" id="236500"/>
    </disease>
    <text>The disease is caused by variants affecting the gene represented in this entry.</text>
</comment>
<comment type="sequence caution" evidence="21">
    <conflict type="erroneous initiation">
        <sequence resource="EMBL-CDS" id="BAA91670"/>
    </conflict>
    <text>Truncated N-terminus.</text>
</comment>
<keyword id="KW-0002">3D-structure</keyword>
<keyword id="KW-0025">Alternative splicing</keyword>
<keyword id="KW-0131">Cell cycle</keyword>
<keyword id="KW-0132">Cell division</keyword>
<keyword id="KW-0175">Coiled coil</keyword>
<keyword id="KW-0963">Cytoplasm</keyword>
<keyword id="KW-0206">Cytoskeleton</keyword>
<keyword id="KW-0217">Developmental protein</keyword>
<keyword id="KW-0225">Disease variant</keyword>
<keyword id="KW-0498">Mitosis</keyword>
<keyword id="KW-0597">Phosphoprotein</keyword>
<keyword id="KW-1267">Proteomics identification</keyword>
<keyword id="KW-1185">Reference proteome</keyword>
<reference key="1">
    <citation type="journal article" date="2006" name="Genomics">
        <title>The novel centrosomal associated protein CEP55 is present in the spindle midzone and the midbody.</title>
        <authorList>
            <person name="Martinez-Garay I."/>
            <person name="Rustom A."/>
            <person name="Gerdes H.-H."/>
            <person name="Kutsche K."/>
        </authorList>
    </citation>
    <scope>NUCLEOTIDE SEQUENCE [MRNA] (ISOFORM 1)</scope>
    <scope>SUBCELLULAR LOCATION</scope>
    <scope>TISSUE SPECIFICITY</scope>
    <scope>HOMODIMERIZATION</scope>
    <scope>VARIANTS GLN-57 AND ALA-99</scope>
</reference>
<reference key="2">
    <citation type="submission" date="2002-09" db="EMBL/GenBank/DDBJ databases">
        <title>Cloning and characterization of URCC6, a novel gene up-regulated in colon cancer.</title>
        <authorList>
            <person name="Shimokawa T."/>
            <person name="Furukawa Y."/>
            <person name="Sakai M."/>
            <person name="Nakamura Y."/>
        </authorList>
    </citation>
    <scope>NUCLEOTIDE SEQUENCE [MRNA] (ISOFORM 1)</scope>
    <scope>VARIANT ALA-99</scope>
</reference>
<reference key="3">
    <citation type="journal article" date="2004" name="Nat. Genet.">
        <title>Complete sequencing and characterization of 21,243 full-length human cDNAs.</title>
        <authorList>
            <person name="Ota T."/>
            <person name="Suzuki Y."/>
            <person name="Nishikawa T."/>
            <person name="Otsuki T."/>
            <person name="Sugiyama T."/>
            <person name="Irie R."/>
            <person name="Wakamatsu A."/>
            <person name="Hayashi K."/>
            <person name="Sato H."/>
            <person name="Nagai K."/>
            <person name="Kimura K."/>
            <person name="Makita H."/>
            <person name="Sekine M."/>
            <person name="Obayashi M."/>
            <person name="Nishi T."/>
            <person name="Shibahara T."/>
            <person name="Tanaka T."/>
            <person name="Ishii S."/>
            <person name="Yamamoto J."/>
            <person name="Saito K."/>
            <person name="Kawai Y."/>
            <person name="Isono Y."/>
            <person name="Nakamura Y."/>
            <person name="Nagahari K."/>
            <person name="Murakami K."/>
            <person name="Yasuda T."/>
            <person name="Iwayanagi T."/>
            <person name="Wagatsuma M."/>
            <person name="Shiratori A."/>
            <person name="Sudo H."/>
            <person name="Hosoiri T."/>
            <person name="Kaku Y."/>
            <person name="Kodaira H."/>
            <person name="Kondo H."/>
            <person name="Sugawara M."/>
            <person name="Takahashi M."/>
            <person name="Kanda K."/>
            <person name="Yokoi T."/>
            <person name="Furuya T."/>
            <person name="Kikkawa E."/>
            <person name="Omura Y."/>
            <person name="Abe K."/>
            <person name="Kamihara K."/>
            <person name="Katsuta N."/>
            <person name="Sato K."/>
            <person name="Tanikawa M."/>
            <person name="Yamazaki M."/>
            <person name="Ninomiya K."/>
            <person name="Ishibashi T."/>
            <person name="Yamashita H."/>
            <person name="Murakawa K."/>
            <person name="Fujimori K."/>
            <person name="Tanai H."/>
            <person name="Kimata M."/>
            <person name="Watanabe M."/>
            <person name="Hiraoka S."/>
            <person name="Chiba Y."/>
            <person name="Ishida S."/>
            <person name="Ono Y."/>
            <person name="Takiguchi S."/>
            <person name="Watanabe S."/>
            <person name="Yosida M."/>
            <person name="Hotuta T."/>
            <person name="Kusano J."/>
            <person name="Kanehori K."/>
            <person name="Takahashi-Fujii A."/>
            <person name="Hara H."/>
            <person name="Tanase T.-O."/>
            <person name="Nomura Y."/>
            <person name="Togiya S."/>
            <person name="Komai F."/>
            <person name="Hara R."/>
            <person name="Takeuchi K."/>
            <person name="Arita M."/>
            <person name="Imose N."/>
            <person name="Musashino K."/>
            <person name="Yuuki H."/>
            <person name="Oshima A."/>
            <person name="Sasaki N."/>
            <person name="Aotsuka S."/>
            <person name="Yoshikawa Y."/>
            <person name="Matsunawa H."/>
            <person name="Ichihara T."/>
            <person name="Shiohata N."/>
            <person name="Sano S."/>
            <person name="Moriya S."/>
            <person name="Momiyama H."/>
            <person name="Satoh N."/>
            <person name="Takami S."/>
            <person name="Terashima Y."/>
            <person name="Suzuki O."/>
            <person name="Nakagawa S."/>
            <person name="Senoh A."/>
            <person name="Mizoguchi H."/>
            <person name="Goto Y."/>
            <person name="Shimizu F."/>
            <person name="Wakebe H."/>
            <person name="Hishigaki H."/>
            <person name="Watanabe T."/>
            <person name="Sugiyama A."/>
            <person name="Takemoto M."/>
            <person name="Kawakami B."/>
            <person name="Yamazaki M."/>
            <person name="Watanabe K."/>
            <person name="Kumagai A."/>
            <person name="Itakura S."/>
            <person name="Fukuzumi Y."/>
            <person name="Fujimori Y."/>
            <person name="Komiyama M."/>
            <person name="Tashiro H."/>
            <person name="Tanigami A."/>
            <person name="Fujiwara T."/>
            <person name="Ono T."/>
            <person name="Yamada K."/>
            <person name="Fujii Y."/>
            <person name="Ozaki K."/>
            <person name="Hirao M."/>
            <person name="Ohmori Y."/>
            <person name="Kawabata A."/>
            <person name="Hikiji T."/>
            <person name="Kobatake N."/>
            <person name="Inagaki H."/>
            <person name="Ikema Y."/>
            <person name="Okamoto S."/>
            <person name="Okitani R."/>
            <person name="Kawakami T."/>
            <person name="Noguchi S."/>
            <person name="Itoh T."/>
            <person name="Shigeta K."/>
            <person name="Senba T."/>
            <person name="Matsumura K."/>
            <person name="Nakajima Y."/>
            <person name="Mizuno T."/>
            <person name="Morinaga M."/>
            <person name="Sasaki M."/>
            <person name="Togashi T."/>
            <person name="Oyama M."/>
            <person name="Hata H."/>
            <person name="Watanabe M."/>
            <person name="Komatsu T."/>
            <person name="Mizushima-Sugano J."/>
            <person name="Satoh T."/>
            <person name="Shirai Y."/>
            <person name="Takahashi Y."/>
            <person name="Nakagawa K."/>
            <person name="Okumura K."/>
            <person name="Nagase T."/>
            <person name="Nomura N."/>
            <person name="Kikuchi H."/>
            <person name="Masuho Y."/>
            <person name="Yamashita R."/>
            <person name="Nakai K."/>
            <person name="Yada T."/>
            <person name="Nakamura Y."/>
            <person name="Ohara O."/>
            <person name="Isogai T."/>
            <person name="Sugano S."/>
        </authorList>
    </citation>
    <scope>NUCLEOTIDE SEQUENCE [LARGE SCALE MRNA] (ISOFORM 1)</scope>
    <scope>NUCLEOTIDE SEQUENCE [LARGE SCALE MRNA] OF 33-464 (ISOFORM 2)</scope>
    <scope>VARIANTS GLN-57; ALA-99 AND LEU-378</scope>
</reference>
<reference key="4">
    <citation type="submission" date="2005-04" db="EMBL/GenBank/DDBJ databases">
        <authorList>
            <person name="Totoki Y."/>
            <person name="Toyoda A."/>
            <person name="Takeda T."/>
            <person name="Sakaki Y."/>
            <person name="Tanaka A."/>
            <person name="Yokoyama S."/>
        </authorList>
    </citation>
    <scope>NUCLEOTIDE SEQUENCE [LARGE SCALE MRNA] (ISOFORM 1)</scope>
    <scope>VARIANTS ALA-99 AND LEU-378</scope>
</reference>
<reference key="5">
    <citation type="journal article" date="2007" name="BMC Genomics">
        <title>The full-ORF clone resource of the German cDNA consortium.</title>
        <authorList>
            <person name="Bechtel S."/>
            <person name="Rosenfelder H."/>
            <person name="Duda A."/>
            <person name="Schmidt C.P."/>
            <person name="Ernst U."/>
            <person name="Wellenreuther R."/>
            <person name="Mehrle A."/>
            <person name="Schuster C."/>
            <person name="Bahr A."/>
            <person name="Bloecker H."/>
            <person name="Heubner D."/>
            <person name="Hoerlein A."/>
            <person name="Michel G."/>
            <person name="Wedler H."/>
            <person name="Koehrer K."/>
            <person name="Ottenwaelder B."/>
            <person name="Poustka A."/>
            <person name="Wiemann S."/>
            <person name="Schupp I."/>
        </authorList>
    </citation>
    <scope>NUCLEOTIDE SEQUENCE [LARGE SCALE MRNA] (ISOFORM 1)</scope>
    <scope>VARIANT ALA-99</scope>
    <source>
        <tissue>Esophageal carcinoma</tissue>
    </source>
</reference>
<reference key="6">
    <citation type="journal article" date="2004" name="Nature">
        <title>The DNA sequence and comparative analysis of human chromosome 10.</title>
        <authorList>
            <person name="Deloukas P."/>
            <person name="Earthrowl M.E."/>
            <person name="Grafham D.V."/>
            <person name="Rubenfield M."/>
            <person name="French L."/>
            <person name="Steward C.A."/>
            <person name="Sims S.K."/>
            <person name="Jones M.C."/>
            <person name="Searle S."/>
            <person name="Scott C."/>
            <person name="Howe K."/>
            <person name="Hunt S.E."/>
            <person name="Andrews T.D."/>
            <person name="Gilbert J.G.R."/>
            <person name="Swarbreck D."/>
            <person name="Ashurst J.L."/>
            <person name="Taylor A."/>
            <person name="Battles J."/>
            <person name="Bird C.P."/>
            <person name="Ainscough R."/>
            <person name="Almeida J.P."/>
            <person name="Ashwell R.I.S."/>
            <person name="Ambrose K.D."/>
            <person name="Babbage A.K."/>
            <person name="Bagguley C.L."/>
            <person name="Bailey J."/>
            <person name="Banerjee R."/>
            <person name="Bates K."/>
            <person name="Beasley H."/>
            <person name="Bray-Allen S."/>
            <person name="Brown A.J."/>
            <person name="Brown J.Y."/>
            <person name="Burford D.C."/>
            <person name="Burrill W."/>
            <person name="Burton J."/>
            <person name="Cahill P."/>
            <person name="Camire D."/>
            <person name="Carter N.P."/>
            <person name="Chapman J.C."/>
            <person name="Clark S.Y."/>
            <person name="Clarke G."/>
            <person name="Clee C.M."/>
            <person name="Clegg S."/>
            <person name="Corby N."/>
            <person name="Coulson A."/>
            <person name="Dhami P."/>
            <person name="Dutta I."/>
            <person name="Dunn M."/>
            <person name="Faulkner L."/>
            <person name="Frankish A."/>
            <person name="Frankland J.A."/>
            <person name="Garner P."/>
            <person name="Garnett J."/>
            <person name="Gribble S."/>
            <person name="Griffiths C."/>
            <person name="Grocock R."/>
            <person name="Gustafson E."/>
            <person name="Hammond S."/>
            <person name="Harley J.L."/>
            <person name="Hart E."/>
            <person name="Heath P.D."/>
            <person name="Ho T.P."/>
            <person name="Hopkins B."/>
            <person name="Horne J."/>
            <person name="Howden P.J."/>
            <person name="Huckle E."/>
            <person name="Hynds C."/>
            <person name="Johnson C."/>
            <person name="Johnson D."/>
            <person name="Kana A."/>
            <person name="Kay M."/>
            <person name="Kimberley A.M."/>
            <person name="Kershaw J.K."/>
            <person name="Kokkinaki M."/>
            <person name="Laird G.K."/>
            <person name="Lawlor S."/>
            <person name="Lee H.M."/>
            <person name="Leongamornlert D.A."/>
            <person name="Laird G."/>
            <person name="Lloyd C."/>
            <person name="Lloyd D.M."/>
            <person name="Loveland J."/>
            <person name="Lovell J."/>
            <person name="McLaren S."/>
            <person name="McLay K.E."/>
            <person name="McMurray A."/>
            <person name="Mashreghi-Mohammadi M."/>
            <person name="Matthews L."/>
            <person name="Milne S."/>
            <person name="Nickerson T."/>
            <person name="Nguyen M."/>
            <person name="Overton-Larty E."/>
            <person name="Palmer S.A."/>
            <person name="Pearce A.V."/>
            <person name="Peck A.I."/>
            <person name="Pelan S."/>
            <person name="Phillimore B."/>
            <person name="Porter K."/>
            <person name="Rice C.M."/>
            <person name="Rogosin A."/>
            <person name="Ross M.T."/>
            <person name="Sarafidou T."/>
            <person name="Sehra H.K."/>
            <person name="Shownkeen R."/>
            <person name="Skuce C.D."/>
            <person name="Smith M."/>
            <person name="Standring L."/>
            <person name="Sycamore N."/>
            <person name="Tester J."/>
            <person name="Thorpe A."/>
            <person name="Torcasso W."/>
            <person name="Tracey A."/>
            <person name="Tromans A."/>
            <person name="Tsolas J."/>
            <person name="Wall M."/>
            <person name="Walsh J."/>
            <person name="Wang H."/>
            <person name="Weinstock K."/>
            <person name="West A.P."/>
            <person name="Willey D.L."/>
            <person name="Whitehead S.L."/>
            <person name="Wilming L."/>
            <person name="Wray P.W."/>
            <person name="Young L."/>
            <person name="Chen Y."/>
            <person name="Lovering R.C."/>
            <person name="Moschonas N.K."/>
            <person name="Siebert R."/>
            <person name="Fechtel K."/>
            <person name="Bentley D."/>
            <person name="Durbin R.M."/>
            <person name="Hubbard T."/>
            <person name="Doucette-Stamm L."/>
            <person name="Beck S."/>
            <person name="Smith D.R."/>
            <person name="Rogers J."/>
        </authorList>
    </citation>
    <scope>NUCLEOTIDE SEQUENCE [LARGE SCALE GENOMIC DNA]</scope>
</reference>
<reference key="7">
    <citation type="submission" date="2005-09" db="EMBL/GenBank/DDBJ databases">
        <authorList>
            <person name="Mural R.J."/>
            <person name="Istrail S."/>
            <person name="Sutton G.G."/>
            <person name="Florea L."/>
            <person name="Halpern A.L."/>
            <person name="Mobarry C.M."/>
            <person name="Lippert R."/>
            <person name="Walenz B."/>
            <person name="Shatkay H."/>
            <person name="Dew I."/>
            <person name="Miller J.R."/>
            <person name="Flanigan M.J."/>
            <person name="Edwards N.J."/>
            <person name="Bolanos R."/>
            <person name="Fasulo D."/>
            <person name="Halldorsson B.V."/>
            <person name="Hannenhalli S."/>
            <person name="Turner R."/>
            <person name="Yooseph S."/>
            <person name="Lu F."/>
            <person name="Nusskern D.R."/>
            <person name="Shue B.C."/>
            <person name="Zheng X.H."/>
            <person name="Zhong F."/>
            <person name="Delcher A.L."/>
            <person name="Huson D.H."/>
            <person name="Kravitz S.A."/>
            <person name="Mouchard L."/>
            <person name="Reinert K."/>
            <person name="Remington K.A."/>
            <person name="Clark A.G."/>
            <person name="Waterman M.S."/>
            <person name="Eichler E.E."/>
            <person name="Adams M.D."/>
            <person name="Hunkapiller M.W."/>
            <person name="Myers E.W."/>
            <person name="Venter J.C."/>
        </authorList>
    </citation>
    <scope>NUCLEOTIDE SEQUENCE [LARGE SCALE GENOMIC DNA]</scope>
    <scope>VARIANTS ALA-99 AND LEU-378</scope>
</reference>
<reference key="8">
    <citation type="journal article" date="2004" name="Genome Res.">
        <title>The status, quality, and expansion of the NIH full-length cDNA project: the Mammalian Gene Collection (MGC).</title>
        <authorList>
            <consortium name="The MGC Project Team"/>
        </authorList>
    </citation>
    <scope>NUCLEOTIDE SEQUENCE [LARGE SCALE MRNA] (ISOFORM 1)</scope>
    <scope>VARIANTS ALA-99 AND LEU-378</scope>
    <source>
        <tissue>Muscle</tissue>
    </source>
</reference>
<reference key="9">
    <citation type="journal article" date="2005" name="Dev. Cell">
        <title>Cdk1/Erk2- and Plk1-dependent phosphorylation of a centrosome protein, Cep55, is required for its recruitment to midbody and cytokinesis.</title>
        <authorList>
            <person name="Fabbro M."/>
            <person name="Zhou B.-B."/>
            <person name="Takahashi M."/>
            <person name="Sarcevic B."/>
            <person name="Lal P."/>
            <person name="Graham M.E."/>
            <person name="Gabrielli B.G."/>
            <person name="Robinson P.J."/>
            <person name="Nigg E.A."/>
            <person name="Ono Y."/>
            <person name="Khanna K.K."/>
        </authorList>
    </citation>
    <scope>FUNCTION</scope>
    <scope>SUBCELLULAR LOCATION</scope>
    <scope>TISSUE SPECIFICITY</scope>
    <scope>INTERACTION WITH PLK1; AKAP9 AND PCNT</scope>
    <scope>PHOSPHORYLATION AT SER-425; SER-428 AND SER-436</scope>
    <scope>MUTAGENESIS OF SER-396; SER-425; SER-428 AND SER-436</scope>
    <scope>IDENTIFICATION BY MASS SPECTROMETRY</scope>
</reference>
<reference key="10">
    <citation type="journal article" date="2006" name="Cell">
        <title>Global, in vivo, and site-specific phosphorylation dynamics in signaling networks.</title>
        <authorList>
            <person name="Olsen J.V."/>
            <person name="Blagoev B."/>
            <person name="Gnad F."/>
            <person name="Macek B."/>
            <person name="Kumar C."/>
            <person name="Mortensen P."/>
            <person name="Mann M."/>
        </authorList>
    </citation>
    <scope>PHOSPHORYLATION [LARGE SCALE ANALYSIS] AT SER-425</scope>
    <scope>IDENTIFICATION BY MASS SPECTROMETRY [LARGE SCALE ANALYSIS]</scope>
    <source>
        <tissue>Cervix carcinoma</tissue>
    </source>
</reference>
<reference key="11">
    <citation type="journal article" date="2007" name="EMBO J.">
        <title>Human ESCRT and ALIX proteins interact with proteins of the midbody and function in cytokinesis.</title>
        <authorList>
            <person name="Morita E."/>
            <person name="Sandrin V."/>
            <person name="Chung H.Y."/>
            <person name="Morham S.G."/>
            <person name="Gygi S.P."/>
            <person name="Rodesch C.K."/>
            <person name="Sundquist W.I."/>
        </authorList>
    </citation>
    <scope>FUNCTION</scope>
    <scope>SUBCELLULAR LOCATION</scope>
    <scope>SELF-ASSOCIATION</scope>
    <scope>INTERACTION WITH PDCD6IP; TSG101; MVB12A; VPS37B; VPS37C AND VPS28</scope>
</reference>
<reference key="12">
    <citation type="journal article" date="2007" name="Science">
        <title>Parallels between cytokinesis and retroviral budding: a role for the ESCRT machinery.</title>
        <authorList>
            <person name="Carlton J.G."/>
            <person name="Martin-Serrano J."/>
        </authorList>
    </citation>
    <scope>SELF-ASSOCIATION</scope>
    <scope>INTERACTION WITH PDCD6IP AND TSG101</scope>
    <scope>SUBCELLULAR LOCATION</scope>
</reference>
<reference key="13">
    <citation type="journal article" date="2008" name="Mol. Cell">
        <title>Kinase-selective enrichment enables quantitative phosphoproteomics of the kinome across the cell cycle.</title>
        <authorList>
            <person name="Daub H."/>
            <person name="Olsen J.V."/>
            <person name="Bairlein M."/>
            <person name="Gnad F."/>
            <person name="Oppermann F.S."/>
            <person name="Korner R."/>
            <person name="Greff Z."/>
            <person name="Keri G."/>
            <person name="Stemmann O."/>
            <person name="Mann M."/>
        </authorList>
    </citation>
    <scope>PHOSPHORYLATION [LARGE SCALE ANALYSIS] AT SER-425</scope>
    <scope>IDENTIFICATION BY MASS SPECTROMETRY [LARGE SCALE ANALYSIS]</scope>
    <source>
        <tissue>Cervix carcinoma</tissue>
    </source>
</reference>
<reference key="14">
    <citation type="journal article" date="2008" name="Proc. Natl. Acad. Sci. U.S.A.">
        <title>Differential requirements for Alix and ESCRT-III in cytokinesis and HIV-1 release.</title>
        <authorList>
            <person name="Carlton J.G."/>
            <person name="Agromayor M."/>
            <person name="Martin-Serrano J."/>
        </authorList>
    </citation>
    <scope>INTERACTION WITH PDCD6IP</scope>
    <scope>SUBCELLULAR LOCATION</scope>
</reference>
<reference key="15">
    <citation type="journal article" date="2008" name="Proc. Natl. Acad. Sci. U.S.A.">
        <title>A quantitative atlas of mitotic phosphorylation.</title>
        <authorList>
            <person name="Dephoure N."/>
            <person name="Zhou C."/>
            <person name="Villen J."/>
            <person name="Beausoleil S.A."/>
            <person name="Bakalarski C.E."/>
            <person name="Elledge S.J."/>
            <person name="Gygi S.P."/>
        </authorList>
    </citation>
    <scope>PHOSPHORYLATION [LARGE SCALE ANALYSIS] AT SER-425; SER-428; THR-430 AND SER-436</scope>
    <scope>IDENTIFICATION BY MASS SPECTROMETRY [LARGE SCALE ANALYSIS]</scope>
    <source>
        <tissue>Cervix carcinoma</tissue>
    </source>
</reference>
<reference key="16">
    <citation type="journal article" date="2009" name="Anal. Chem.">
        <title>Lys-N and trypsin cover complementary parts of the phosphoproteome in a refined SCX-based approach.</title>
        <authorList>
            <person name="Gauci S."/>
            <person name="Helbig A.O."/>
            <person name="Slijper M."/>
            <person name="Krijgsveld J."/>
            <person name="Heck A.J."/>
            <person name="Mohammed S."/>
        </authorList>
    </citation>
    <scope>IDENTIFICATION BY MASS SPECTROMETRY [LARGE SCALE ANALYSIS]</scope>
</reference>
<reference key="17">
    <citation type="journal article" date="2010" name="Sci. Signal.">
        <title>Quantitative phosphoproteomics reveals widespread full phosphorylation site occupancy during mitosis.</title>
        <authorList>
            <person name="Olsen J.V."/>
            <person name="Vermeulen M."/>
            <person name="Santamaria A."/>
            <person name="Kumar C."/>
            <person name="Miller M.L."/>
            <person name="Jensen L.J."/>
            <person name="Gnad F."/>
            <person name="Cox J."/>
            <person name="Jensen T.S."/>
            <person name="Nigg E.A."/>
            <person name="Brunak S."/>
            <person name="Mann M."/>
        </authorList>
    </citation>
    <scope>IDENTIFICATION BY MASS SPECTROMETRY [LARGE SCALE ANALYSIS]</scope>
    <source>
        <tissue>Cervix carcinoma</tissue>
    </source>
</reference>
<reference key="18">
    <citation type="journal article" date="2011" name="Sci. Signal.">
        <title>System-wide temporal characterization of the proteome and phosphoproteome of human embryonic stem cell differentiation.</title>
        <authorList>
            <person name="Rigbolt K.T."/>
            <person name="Prokhorova T.A."/>
            <person name="Akimov V."/>
            <person name="Henningsen J."/>
            <person name="Johansen P.T."/>
            <person name="Kratchmarova I."/>
            <person name="Kassem M."/>
            <person name="Mann M."/>
            <person name="Olsen J.V."/>
            <person name="Blagoev B."/>
        </authorList>
    </citation>
    <scope>IDENTIFICATION BY MASS SPECTROMETRY [LARGE SCALE ANALYSIS]</scope>
</reference>
<reference key="19">
    <citation type="journal article" date="2011" name="Science">
        <title>Cortical constriction during abscission involves helices of ESCRT-III-dependent filaments.</title>
        <authorList>
            <person name="Guizetti J."/>
            <person name="Schermelleh L."/>
            <person name="Maentler J."/>
            <person name="Maar S."/>
            <person name="Poser I."/>
            <person name="Leonhardt H."/>
            <person name="Mueller-Reichert T."/>
            <person name="Gerlich D.W."/>
        </authorList>
    </citation>
    <scope>SUBCELLULAR LOCATION</scope>
</reference>
<reference key="20">
    <citation type="journal article" date="2013" name="J. Proteome Res.">
        <title>Toward a comprehensive characterization of a human cancer cell phosphoproteome.</title>
        <authorList>
            <person name="Zhou H."/>
            <person name="Di Palma S."/>
            <person name="Preisinger C."/>
            <person name="Peng M."/>
            <person name="Polat A.N."/>
            <person name="Heck A.J."/>
            <person name="Mohammed S."/>
        </authorList>
    </citation>
    <scope>PHOSPHORYLATION [LARGE SCALE ANALYSIS] AT SER-428 AND SER-436</scope>
    <scope>IDENTIFICATION BY MASS SPECTROMETRY [LARGE SCALE ANALYSIS]</scope>
    <source>
        <tissue>Cervix carcinoma</tissue>
        <tissue>Erythroleukemia</tissue>
    </source>
</reference>
<reference key="21">
    <citation type="journal article" date="2015" name="Mol. Cell. Proteomics">
        <title>Myotubularin-related proteins 3 and 4 interact with polo-like kinase 1 and centrosomal protein of 55 kDa to ensure proper abscission.</title>
        <authorList>
            <person name="St-Denis N."/>
            <person name="Gupta G.D."/>
            <person name="Lin Z.Y."/>
            <person name="Gonzalez-Badillo B."/>
            <person name="Pelletier L."/>
            <person name="Gingras A.C."/>
        </authorList>
    </citation>
    <scope>INTERACTION WITH MTMR3; MTMR4 AND PLK1</scope>
</reference>
<reference key="22">
    <citation type="journal article" date="2008" name="Science">
        <title>Midbody targeting of the ESCRT machinery by a noncanonical coiled coil in CEP55.</title>
        <authorList>
            <person name="Lee H.H."/>
            <person name="Elia N."/>
            <person name="Ghirlando R."/>
            <person name="Lippincott-Schwartz J."/>
            <person name="Hurley J.H."/>
        </authorList>
    </citation>
    <scope>X-RAY CRYSTALLOGRAPHY (2.00 ANGSTROMS) OF 160-217 IN COMPLEX WITH PDCD6IP</scope>
    <scope>INTERACTION WITH TSG101</scope>
    <scope>MUTAGENESIS OF TRP-184; TYR-187; ASP-188; ARG-191 AND GLU-192</scope>
</reference>
<reference key="23">
    <citation type="journal article" date="2009" name="Sci. Signal.">
        <title>Quantitative phosphoproteomic analysis of T cell receptor signaling reveals system-wide modulation of protein-protein interactions.</title>
        <authorList>
            <person name="Mayya V."/>
            <person name="Lundgren D.H."/>
            <person name="Hwang S.-I."/>
            <person name="Rezaul K."/>
            <person name="Wu L."/>
            <person name="Eng J.K."/>
            <person name="Rodionov V."/>
            <person name="Han D.K."/>
        </authorList>
    </citation>
    <scope>VARIANT [LARGE SCALE ANALYSIS] ALA-99</scope>
    <scope>IDENTIFICATION BY MASS SPECTROMETRY [LARGE SCALE ANALYSIS]</scope>
    <source>
        <tissue>Leukemic T-cell</tissue>
    </source>
</reference>
<reference key="24">
    <citation type="journal article" date="2011" name="BMC Syst. Biol.">
        <title>Initial characterization of the human central proteome.</title>
        <authorList>
            <person name="Burkard T.R."/>
            <person name="Planyavsky M."/>
            <person name="Kaupe I."/>
            <person name="Breitwieser F.P."/>
            <person name="Buerckstuemmer T."/>
            <person name="Bennett K.L."/>
            <person name="Superti-Furga G."/>
            <person name="Colinge J."/>
        </authorList>
    </citation>
    <scope>VARIANT [LARGE SCALE ANALYSIS] ALA-99</scope>
    <scope>IDENTIFICATION BY MASS SPECTROMETRY [LARGE SCALE ANALYSIS]</scope>
</reference>
<reference key="25">
    <citation type="journal article" date="2017" name="Clin. Genet.">
        <title>A nonsense mutation in CEP55 defines a new locus for a Meckel-like syndrome, an autosomal recessive lethal fetal ciliopathy.</title>
        <authorList>
            <person name="Bondeson M.L."/>
            <person name="Ericson K."/>
            <person name="Gudmundsson S."/>
            <person name="Ameur A."/>
            <person name="Ponten F."/>
            <person name="Wesstroem J."/>
            <person name="Frykholm C."/>
            <person name="Wilbe M."/>
        </authorList>
    </citation>
    <scope>VARIANT MARCH 86-ARG--LYS-464 DEL</scope>
    <scope>TISSUE SPECIFICITY</scope>
    <scope>INVOLVEMENT IN MARCH</scope>
</reference>
<reference key="26">
    <citation type="journal article" date="2017" name="J. Med. Genet.">
        <title>A truncating mutation in CEP55 is the likely cause of MARCH, a novel syndrome affecting neuronal mitosis.</title>
        <authorList>
            <consortium name="FORGE Canada Consortium"/>
            <consortium name="Canadian Rare Diseases: Models &amp; Mechanisms Network,"/>
            <person name="Frosk P."/>
            <person name="Arts H.H."/>
            <person name="Philippe J."/>
            <person name="Gunn C.S."/>
            <person name="Brown E.L."/>
            <person name="Chodirker B."/>
            <person name="Simard L."/>
            <person name="Majewski J."/>
            <person name="Fahiminiya S."/>
            <person name="Russell C."/>
            <person name="Liu Y.P."/>
            <person name="Hegele R."/>
            <person name="Katsanis N."/>
            <person name="Goerz C."/>
            <person name="Del Bigio M.R."/>
            <person name="Davis E.E."/>
        </authorList>
    </citation>
    <scope>VARIANT MARCH 425-SER--LYS-464 DEL</scope>
    <scope>CHARACTERIZATION OF VARIANT MARCH 425-SER--LYS-464 DEL</scope>
    <scope>FUNCTION</scope>
    <scope>SUBCELLULAR LOCATION</scope>
    <scope>TISSUE SPECIFICITY</scope>
    <scope>CHARACTERIZATION OF VARIANTS GLN-57 AND LEU-378</scope>
</reference>
<proteinExistence type="evidence at protein level"/>
<feature type="chain" id="PRO_0000089777" description="Centrosomal protein of 55 kDa">
    <location>
        <begin position="1"/>
        <end position="464"/>
    </location>
</feature>
<feature type="region of interest" description="Disordered" evidence="3">
    <location>
        <begin position="1"/>
        <end position="26"/>
    </location>
</feature>
<feature type="region of interest" description="Interaction with TSG101">
    <location>
        <begin position="157"/>
        <end position="236"/>
    </location>
</feature>
<feature type="region of interest" description="Interaction with PDCD6IP">
    <location>
        <begin position="160"/>
        <end position="214"/>
    </location>
</feature>
<feature type="region of interest" description="Required for localization to the interphase centrosome and to the midbody during cytokinesis" evidence="6">
    <location>
        <begin position="355"/>
        <end position="464"/>
    </location>
</feature>
<feature type="coiled-coil region" evidence="2">
    <location>
        <begin position="22"/>
        <end position="186"/>
    </location>
</feature>
<feature type="coiled-coil region" evidence="2">
    <location>
        <begin position="238"/>
        <end position="337"/>
    </location>
</feature>
<feature type="coiled-coil region" evidence="2">
    <location>
        <begin position="374"/>
        <end position="403"/>
    </location>
</feature>
<feature type="compositionally biased region" description="Basic and acidic residues" evidence="3">
    <location>
        <begin position="1"/>
        <end position="11"/>
    </location>
</feature>
<feature type="modified residue" description="Phosphoserine" evidence="1">
    <location>
        <position position="96"/>
    </location>
</feature>
<feature type="modified residue" description="Phosphoserine; by CDK1 and MAPK1" evidence="6 23 24 25">
    <location>
        <position position="425"/>
    </location>
</feature>
<feature type="modified residue" description="Phosphoserine; by CDK1 and MAPK1" evidence="6 24 28">
    <location>
        <position position="428"/>
    </location>
</feature>
<feature type="modified residue" description="Phosphothreonine" evidence="24">
    <location>
        <position position="430"/>
    </location>
</feature>
<feature type="modified residue" description="Phosphoserine; by PLK1" evidence="6 24 28">
    <location>
        <position position="436"/>
    </location>
</feature>
<feature type="splice variant" id="VSP_014750" description="In isoform 2." evidence="20">
    <original>NQITQLESLKQL</original>
    <variation>KNNTVGILETAS</variation>
    <location>
        <begin position="389"/>
        <end position="400"/>
    </location>
</feature>
<feature type="splice variant" id="VSP_014751" description="In isoform 2." evidence="20">
    <location>
        <begin position="401"/>
        <end position="464"/>
    </location>
</feature>
<feature type="sequence variant" id="VAR_026559" description="No effect on protein localization to midbody ring; dbSNP:rs3740370." evidence="4 7 15">
    <original>H</original>
    <variation>Q</variation>
    <location>
        <position position="57"/>
    </location>
</feature>
<feature type="sequence variant" id="VAR_079363" description="In MARCH." evidence="16">
    <location>
        <begin position="86"/>
        <end position="464"/>
    </location>
</feature>
<feature type="sequence variant" id="VAR_022996" description="In dbSNP:rs7080916." evidence="4 5 7 10 17 18 19 26 27">
    <original>T</original>
    <variation>A</variation>
    <location>
        <position position="99"/>
    </location>
</feature>
<feature type="sequence variant" id="VAR_056791" description="In dbSNP:rs7072484.">
    <original>C</original>
    <variation>R</variation>
    <location>
        <position position="236"/>
    </location>
</feature>
<feature type="sequence variant" id="VAR_022997" description="No effect on protein localization to midbody ring; rescues craniofacial development when expressed in a zebrafish heterologous system; dbSNP:rs2293277." evidence="4 5 15 18 19">
    <original>H</original>
    <variation>L</variation>
    <location>
        <position position="378"/>
    </location>
</feature>
<feature type="sequence variant" id="VAR_079364" description="In MARCH; loss of protein localization to midbody ring; loss of function; fails to rescue craniofacial development when expressed in a zebrafish heterologous system." evidence="15">
    <location>
        <begin position="425"/>
        <end position="464"/>
    </location>
</feature>
<feature type="mutagenesis site" description="Abolishes interaction with PDCD6IP." evidence="12">
    <original>W</original>
    <variation>A</variation>
    <location>
        <position position="184"/>
    </location>
</feature>
<feature type="mutagenesis site" description="Abolishes interaction with PDCD6IP." evidence="12">
    <original>Y</original>
    <variation>A</variation>
    <location>
        <position position="187"/>
    </location>
</feature>
<feature type="mutagenesis site" description="Diminishes interaction with PDCD6IP." evidence="12">
    <original>D</original>
    <variation>A</variation>
    <location>
        <position position="188"/>
    </location>
</feature>
<feature type="mutagenesis site" description="Abolishes interaction with PDCD6IP." evidence="12">
    <original>R</original>
    <variation>A</variation>
    <location>
        <position position="191"/>
    </location>
</feature>
<feature type="mutagenesis site" description="Abolishes interaction with PDCD6IP." evidence="12">
    <original>E</original>
    <variation>A</variation>
    <location>
        <position position="192"/>
    </location>
</feature>
<feature type="mutagenesis site" description="No effect on phosphorylation in mitotic cells." evidence="6">
    <original>S</original>
    <variation>A</variation>
    <location>
        <position position="396"/>
    </location>
</feature>
<feature type="mutagenesis site" description="Partial loss of phosphorylation in mitotic cells. Complete loss of phosphorylation in mitotic cells; when associated with A-428. Remains associated with the centrosome throughout mitosis; when associated with A-428. Arrests mitotic cells at the midbody stage; when associated with A-428 and A-436." evidence="6">
    <original>S</original>
    <variation>A</variation>
    <location>
        <position position="425"/>
    </location>
</feature>
<feature type="mutagenesis site" description="Partial loss of phosphorylation in mitotic cells. Complete loss of phosphorylation in mitotic cells; when associated with A-425. Remains associated with the centrosome throughout mitosis; when associated with A-425. Arrests mitotic cells at the midbody stage; when associated with A-425 and A-436." evidence="6">
    <original>S</original>
    <variation>A</variation>
    <location>
        <position position="428"/>
    </location>
</feature>
<feature type="mutagenesis site" description="No effect on phosphorylation in mitotic cells. Arrests mitotic cells at the midbody stage; when associated with A-425 and A-428." evidence="6">
    <original>S</original>
    <variation>A</variation>
    <location>
        <position position="436"/>
    </location>
</feature>
<feature type="sequence conflict" description="In Ref. 4; BAD97215." evidence="21" ref="4">
    <original>V</original>
    <variation>A</variation>
    <location>
        <position position="155"/>
    </location>
</feature>
<feature type="sequence conflict" description="In Ref. 4; BAD97215." evidence="21" ref="4">
    <original>E</original>
    <variation>G</variation>
    <location>
        <position position="204"/>
    </location>
</feature>
<feature type="sequence conflict" description="In Ref. 5; CAE45837." evidence="21" ref="5">
    <original>R</original>
    <variation>G</variation>
    <location>
        <position position="298"/>
    </location>
</feature>
<feature type="sequence conflict" description="In Ref. 1; AAX14687 and 3; BAA91670." evidence="21" ref="1 3">
    <original>F</original>
    <variation>S</variation>
    <location>
        <position position="334"/>
    </location>
</feature>
<feature type="sequence conflict" description="In Ref. 1; AAX14687." evidence="21" ref="1">
    <original>E</original>
    <variation>G</variation>
    <location>
        <position position="435"/>
    </location>
</feature>
<feature type="helix" evidence="29">
    <location>
        <begin position="166"/>
        <end position="209"/>
    </location>
</feature>
<gene>
    <name evidence="22" type="primary">CEP55</name>
    <name evidence="22" type="synonym">C10orf3</name>
    <name type="synonym">URCC6</name>
</gene>
<evidence type="ECO:0000250" key="1">
    <source>
        <dbReference type="UniProtKB" id="Q8BT07"/>
    </source>
</evidence>
<evidence type="ECO:0000255" key="2"/>
<evidence type="ECO:0000256" key="3">
    <source>
        <dbReference type="SAM" id="MobiDB-lite"/>
    </source>
</evidence>
<evidence type="ECO:0000269" key="4">
    <source>
    </source>
</evidence>
<evidence type="ECO:0000269" key="5">
    <source>
    </source>
</evidence>
<evidence type="ECO:0000269" key="6">
    <source>
    </source>
</evidence>
<evidence type="ECO:0000269" key="7">
    <source>
    </source>
</evidence>
<evidence type="ECO:0000269" key="8">
    <source>
    </source>
</evidence>
<evidence type="ECO:0000269" key="9">
    <source>
    </source>
</evidence>
<evidence type="ECO:0000269" key="10">
    <source>
    </source>
</evidence>
<evidence type="ECO:0000269" key="11">
    <source>
    </source>
</evidence>
<evidence type="ECO:0000269" key="12">
    <source>
    </source>
</evidence>
<evidence type="ECO:0000269" key="13">
    <source>
    </source>
</evidence>
<evidence type="ECO:0000269" key="14">
    <source>
    </source>
</evidence>
<evidence type="ECO:0000269" key="15">
    <source>
    </source>
</evidence>
<evidence type="ECO:0000269" key="16">
    <source>
    </source>
</evidence>
<evidence type="ECO:0000269" key="17">
    <source ref="2"/>
</evidence>
<evidence type="ECO:0000269" key="18">
    <source ref="4"/>
</evidence>
<evidence type="ECO:0000269" key="19">
    <source ref="7"/>
</evidence>
<evidence type="ECO:0000303" key="20">
    <source>
    </source>
</evidence>
<evidence type="ECO:0000305" key="21"/>
<evidence type="ECO:0000312" key="22">
    <source>
        <dbReference type="HGNC" id="HGNC:1161"/>
    </source>
</evidence>
<evidence type="ECO:0007744" key="23">
    <source>
    </source>
</evidence>
<evidence type="ECO:0007744" key="24">
    <source>
    </source>
</evidence>
<evidence type="ECO:0007744" key="25">
    <source>
    </source>
</evidence>
<evidence type="ECO:0007744" key="26">
    <source>
    </source>
</evidence>
<evidence type="ECO:0007744" key="27">
    <source>
    </source>
</evidence>
<evidence type="ECO:0007744" key="28">
    <source>
    </source>
</evidence>
<evidence type="ECO:0007829" key="29">
    <source>
        <dbReference type="PDB" id="3E1R"/>
    </source>
</evidence>
<sequence length="464" mass="54178">MSSRSTKDLIKSKWGSKPSNSKSETTLEKLKGEIAHLKTSVDEITSGKGKLTDKERHRLLEKIRVLEAEKEKNAYQLTEKDKEIQRLRDQLKARYSTTTLLEQLEETTREGERREQVLKALSEEKDVLKQQLSAATSRIAELESKTNTLRLSQTVAPNCFNSSINNIHEMEIQLKDALEKNQQWLVYDQQREVYVKGLLAKIFELEKKTETAAHSLPQQTKKPESEGYLQEEKQKCYNDLLASAKKDLEVERQTITQLSFELSEFRRKYEETQKEVHNLNQLLYSQRRADVQHLEDDRHKTEKIQKLREENDIARGKLEEEKKRSEELLSQVQFLYTSLLKQQEEQTRVALLEQQMQACTLDFENEKLDRQHVQHQLHVILKELRKARNQITQLESLKQLHEFAITEPLVTFQGETENREKVAASPKSPTAALNESLVECPKCNIQYPATEHRDLLVHVEYCSK</sequence>
<dbReference type="EMBL" id="AY788918">
    <property type="protein sequence ID" value="AAX14687.1"/>
    <property type="molecule type" value="mRNA"/>
</dbReference>
<dbReference type="EMBL" id="AB091343">
    <property type="protein sequence ID" value="BAE45243.1"/>
    <property type="molecule type" value="mRNA"/>
</dbReference>
<dbReference type="EMBL" id="AK001402">
    <property type="protein sequence ID" value="BAA91670.1"/>
    <property type="status" value="ALT_INIT"/>
    <property type="molecule type" value="mRNA"/>
</dbReference>
<dbReference type="EMBL" id="AK315536">
    <property type="protein sequence ID" value="BAG37915.1"/>
    <property type="molecule type" value="mRNA"/>
</dbReference>
<dbReference type="EMBL" id="AK223495">
    <property type="protein sequence ID" value="BAD97215.1"/>
    <property type="molecule type" value="mRNA"/>
</dbReference>
<dbReference type="EMBL" id="BX640718">
    <property type="protein sequence ID" value="CAE45837.1"/>
    <property type="molecule type" value="mRNA"/>
</dbReference>
<dbReference type="EMBL" id="AL356214">
    <property type="status" value="NOT_ANNOTATED_CDS"/>
    <property type="molecule type" value="Genomic_DNA"/>
</dbReference>
<dbReference type="EMBL" id="CH471066">
    <property type="protein sequence ID" value="EAW50071.1"/>
    <property type="molecule type" value="Genomic_DNA"/>
</dbReference>
<dbReference type="EMBL" id="CH471066">
    <property type="protein sequence ID" value="EAW50072.1"/>
    <property type="molecule type" value="Genomic_DNA"/>
</dbReference>
<dbReference type="EMBL" id="BC008947">
    <property type="protein sequence ID" value="AAH08947.1"/>
    <property type="molecule type" value="mRNA"/>
</dbReference>
<dbReference type="CCDS" id="CCDS7428.1">
    <molecule id="Q53EZ4-1"/>
</dbReference>
<dbReference type="RefSeq" id="NP_001120654.2">
    <molecule id="Q53EZ4-1"/>
    <property type="nucleotide sequence ID" value="NM_001127182.2"/>
</dbReference>
<dbReference type="RefSeq" id="NP_060601.3">
    <molecule id="Q53EZ4-1"/>
    <property type="nucleotide sequence ID" value="NM_018131.4"/>
</dbReference>
<dbReference type="PDB" id="3E1R">
    <property type="method" value="X-ray"/>
    <property type="resolution" value="2.00 A"/>
    <property type="chains" value="A/B=160-217"/>
</dbReference>
<dbReference type="PDB" id="3WUT">
    <property type="method" value="X-ray"/>
    <property type="resolution" value="2.30 A"/>
    <property type="chains" value="A/B/D/E/G/H/J/K=160-217"/>
</dbReference>
<dbReference type="PDB" id="3WUU">
    <property type="method" value="X-ray"/>
    <property type="resolution" value="2.90 A"/>
    <property type="chains" value="A/B/D/E/G/H/J/K=160-217"/>
</dbReference>
<dbReference type="PDB" id="3WUV">
    <property type="method" value="X-ray"/>
    <property type="resolution" value="2.79 A"/>
    <property type="chains" value="A/B/D/E/G/H/J/K/M/N/P/Q=160-217"/>
</dbReference>
<dbReference type="PDBsum" id="3E1R"/>
<dbReference type="PDBsum" id="3WUT"/>
<dbReference type="PDBsum" id="3WUU"/>
<dbReference type="PDBsum" id="3WUV"/>
<dbReference type="SMR" id="Q53EZ4"/>
<dbReference type="BioGRID" id="120465">
    <property type="interactions" value="283"/>
</dbReference>
<dbReference type="CORUM" id="Q53EZ4"/>
<dbReference type="DIP" id="DIP-44581N"/>
<dbReference type="ELM" id="Q53EZ4"/>
<dbReference type="FunCoup" id="Q53EZ4">
    <property type="interactions" value="942"/>
</dbReference>
<dbReference type="IntAct" id="Q53EZ4">
    <property type="interactions" value="158"/>
</dbReference>
<dbReference type="MINT" id="Q53EZ4"/>
<dbReference type="STRING" id="9606.ENSP00000360540"/>
<dbReference type="GlyGen" id="Q53EZ4">
    <property type="glycosylation" value="1 site, 1 O-linked glycan (1 site)"/>
</dbReference>
<dbReference type="iPTMnet" id="Q53EZ4"/>
<dbReference type="PhosphoSitePlus" id="Q53EZ4"/>
<dbReference type="SwissPalm" id="Q53EZ4"/>
<dbReference type="BioMuta" id="CEP55"/>
<dbReference type="DMDM" id="296439403"/>
<dbReference type="jPOST" id="Q53EZ4"/>
<dbReference type="MassIVE" id="Q53EZ4"/>
<dbReference type="PaxDb" id="9606-ENSP00000360540"/>
<dbReference type="PeptideAtlas" id="Q53EZ4"/>
<dbReference type="ProteomicsDB" id="62452">
    <molecule id="Q53EZ4-1"/>
</dbReference>
<dbReference type="ProteomicsDB" id="62453">
    <molecule id="Q53EZ4-2"/>
</dbReference>
<dbReference type="Pumba" id="Q53EZ4"/>
<dbReference type="Antibodypedia" id="30468">
    <property type="antibodies" value="326 antibodies from 32 providers"/>
</dbReference>
<dbReference type="DNASU" id="55165"/>
<dbReference type="Ensembl" id="ENST00000371485.8">
    <molecule id="Q53EZ4-1"/>
    <property type="protein sequence ID" value="ENSP00000360540.3"/>
    <property type="gene ID" value="ENSG00000138180.16"/>
</dbReference>
<dbReference type="GeneID" id="55165"/>
<dbReference type="KEGG" id="hsa:55165"/>
<dbReference type="MANE-Select" id="ENST00000371485.8">
    <property type="protein sequence ID" value="ENSP00000360540.3"/>
    <property type="RefSeq nucleotide sequence ID" value="NM_018131.5"/>
    <property type="RefSeq protein sequence ID" value="NP_060601.4"/>
</dbReference>
<dbReference type="UCSC" id="uc001kiq.4">
    <molecule id="Q53EZ4-1"/>
    <property type="organism name" value="human"/>
</dbReference>
<dbReference type="AGR" id="HGNC:1161"/>
<dbReference type="CTD" id="55165"/>
<dbReference type="DisGeNET" id="55165"/>
<dbReference type="GeneCards" id="CEP55"/>
<dbReference type="HGNC" id="HGNC:1161">
    <property type="gene designation" value="CEP55"/>
</dbReference>
<dbReference type="HPA" id="ENSG00000138180">
    <property type="expression patterns" value="Tissue enhanced (lymphoid tissue, testis)"/>
</dbReference>
<dbReference type="MalaCards" id="CEP55"/>
<dbReference type="MIM" id="236500">
    <property type="type" value="phenotype"/>
</dbReference>
<dbReference type="MIM" id="610000">
    <property type="type" value="gene"/>
</dbReference>
<dbReference type="neXtProt" id="NX_Q53EZ4"/>
<dbReference type="OpenTargets" id="ENSG00000138180"/>
<dbReference type="Orphanet" id="500135">
    <property type="disease" value="Multinucleated neurons-anhydramnios-renal dysplasia-cerebellar hypoplasia-hydranencephaly syndrome"/>
</dbReference>
<dbReference type="PharmGKB" id="PA25475"/>
<dbReference type="VEuPathDB" id="HostDB:ENSG00000138180"/>
<dbReference type="eggNOG" id="ENOG502QTDI">
    <property type="taxonomic scope" value="Eukaryota"/>
</dbReference>
<dbReference type="GeneTree" id="ENSGT00510000047961"/>
<dbReference type="HOGENOM" id="CLU_047132_0_0_1"/>
<dbReference type="InParanoid" id="Q53EZ4"/>
<dbReference type="OMA" id="AVMAKCS"/>
<dbReference type="OrthoDB" id="8441172at2759"/>
<dbReference type="PAN-GO" id="Q53EZ4">
    <property type="GO annotations" value="3 GO annotations based on evolutionary models"/>
</dbReference>
<dbReference type="PhylomeDB" id="Q53EZ4"/>
<dbReference type="TreeFam" id="TF331107"/>
<dbReference type="PathwayCommons" id="Q53EZ4"/>
<dbReference type="SignaLink" id="Q53EZ4"/>
<dbReference type="SIGNOR" id="Q53EZ4"/>
<dbReference type="BioGRID-ORCS" id="55165">
    <property type="hits" value="200 hits in 1165 CRISPR screens"/>
</dbReference>
<dbReference type="CD-CODE" id="8C2F96ED">
    <property type="entry name" value="Centrosome"/>
</dbReference>
<dbReference type="ChiTaRS" id="CEP55">
    <property type="organism name" value="human"/>
</dbReference>
<dbReference type="EvolutionaryTrace" id="Q53EZ4"/>
<dbReference type="GeneWiki" id="CEP55"/>
<dbReference type="GenomeRNAi" id="55165"/>
<dbReference type="Pharos" id="Q53EZ4">
    <property type="development level" value="Tbio"/>
</dbReference>
<dbReference type="PRO" id="PR:Q53EZ4"/>
<dbReference type="Proteomes" id="UP000005640">
    <property type="component" value="Chromosome 10"/>
</dbReference>
<dbReference type="RNAct" id="Q53EZ4">
    <property type="molecule type" value="protein"/>
</dbReference>
<dbReference type="Bgee" id="ENSG00000138180">
    <property type="expression patterns" value="Expressed in ventricular zone and 126 other cell types or tissues"/>
</dbReference>
<dbReference type="ExpressionAtlas" id="Q53EZ4">
    <property type="expression patterns" value="baseline and differential"/>
</dbReference>
<dbReference type="GO" id="GO:0005814">
    <property type="term" value="C:centriole"/>
    <property type="evidence" value="ECO:0007669"/>
    <property type="project" value="UniProtKB-SubCell"/>
</dbReference>
<dbReference type="GO" id="GO:0005813">
    <property type="term" value="C:centrosome"/>
    <property type="evidence" value="ECO:0000314"/>
    <property type="project" value="UniProtKB"/>
</dbReference>
<dbReference type="GO" id="GO:0032154">
    <property type="term" value="C:cleavage furrow"/>
    <property type="evidence" value="ECO:0007669"/>
    <property type="project" value="UniProtKB-SubCell"/>
</dbReference>
<dbReference type="GO" id="GO:0005737">
    <property type="term" value="C:cytoplasm"/>
    <property type="evidence" value="ECO:0007669"/>
    <property type="project" value="UniProtKB-SubCell"/>
</dbReference>
<dbReference type="GO" id="GO:0090543">
    <property type="term" value="C:Flemming body"/>
    <property type="evidence" value="ECO:0000314"/>
    <property type="project" value="UniProtKB"/>
</dbReference>
<dbReference type="GO" id="GO:0045171">
    <property type="term" value="C:intercellular bridge"/>
    <property type="evidence" value="ECO:0007669"/>
    <property type="project" value="Ensembl"/>
</dbReference>
<dbReference type="GO" id="GO:0016020">
    <property type="term" value="C:membrane"/>
    <property type="evidence" value="ECO:0007005"/>
    <property type="project" value="UniProtKB"/>
</dbReference>
<dbReference type="GO" id="GO:0030496">
    <property type="term" value="C:midbody"/>
    <property type="evidence" value="ECO:0000314"/>
    <property type="project" value="UniProtKB"/>
</dbReference>
<dbReference type="GO" id="GO:0042802">
    <property type="term" value="F:identical protein binding"/>
    <property type="evidence" value="ECO:0000353"/>
    <property type="project" value="IntAct"/>
</dbReference>
<dbReference type="GO" id="GO:1904888">
    <property type="term" value="P:cranial skeletal system development"/>
    <property type="evidence" value="ECO:0000315"/>
    <property type="project" value="UniProtKB"/>
</dbReference>
<dbReference type="GO" id="GO:0045184">
    <property type="term" value="P:establishment of protein localization"/>
    <property type="evidence" value="ECO:0000315"/>
    <property type="project" value="UniProtKB"/>
</dbReference>
<dbReference type="GO" id="GO:0061952">
    <property type="term" value="P:midbody abscission"/>
    <property type="evidence" value="ECO:0000315"/>
    <property type="project" value="UniProtKB"/>
</dbReference>
<dbReference type="GO" id="GO:0000281">
    <property type="term" value="P:mitotic cytokinesis"/>
    <property type="evidence" value="ECO:0000316"/>
    <property type="project" value="MGI"/>
</dbReference>
<dbReference type="GO" id="GO:0051896">
    <property type="term" value="P:regulation of phosphatidylinositol 3-kinase/protein kinase B signal transduction"/>
    <property type="evidence" value="ECO:0007669"/>
    <property type="project" value="InterPro"/>
</dbReference>
<dbReference type="FunFam" id="1.20.5.1180:FF:000002">
    <property type="entry name" value="Centrosomal protein of 55 kDa"/>
    <property type="match status" value="1"/>
</dbReference>
<dbReference type="FunFam" id="1.20.5.990:FF:000006">
    <property type="entry name" value="Centrosomal protein of 55 kDa"/>
    <property type="match status" value="1"/>
</dbReference>
<dbReference type="Gene3D" id="1.20.5.1180">
    <property type="entry name" value="Geminin coiled-coil domain"/>
    <property type="match status" value="1"/>
</dbReference>
<dbReference type="Gene3D" id="1.20.5.990">
    <property type="entry name" value="Nemo cc2-lz domain - 1d5 darpin complex"/>
    <property type="match status" value="1"/>
</dbReference>
<dbReference type="InterPro" id="IPR038926">
    <property type="entry name" value="CEP55"/>
</dbReference>
<dbReference type="InterPro" id="IPR022008">
    <property type="entry name" value="EABR"/>
</dbReference>
<dbReference type="PANTHER" id="PTHR31838">
    <property type="entry name" value="CENTROSOMAL PROTEIN OF 55 KDA"/>
    <property type="match status" value="1"/>
</dbReference>
<dbReference type="PANTHER" id="PTHR31838:SF1">
    <property type="entry name" value="CENTROSOMAL PROTEIN OF 55 KDA"/>
    <property type="match status" value="1"/>
</dbReference>
<dbReference type="Pfam" id="PF12180">
    <property type="entry name" value="EABR"/>
    <property type="match status" value="1"/>
</dbReference>
<accession>Q53EZ4</accession>
<accession>B2RDG8</accession>
<accession>D3DR37</accession>
<accession>Q32WF5</accession>
<accession>Q3MV20</accession>
<accession>Q5VY28</accession>
<accession>Q6N034</accession>
<accession>Q96H32</accession>
<accession>Q9NVS7</accession>
<name>CEP55_HUMAN</name>
<organism>
    <name type="scientific">Homo sapiens</name>
    <name type="common">Human</name>
    <dbReference type="NCBI Taxonomy" id="9606"/>
    <lineage>
        <taxon>Eukaryota</taxon>
        <taxon>Metazoa</taxon>
        <taxon>Chordata</taxon>
        <taxon>Craniata</taxon>
        <taxon>Vertebrata</taxon>
        <taxon>Euteleostomi</taxon>
        <taxon>Mammalia</taxon>
        <taxon>Eutheria</taxon>
        <taxon>Euarchontoglires</taxon>
        <taxon>Primates</taxon>
        <taxon>Haplorrhini</taxon>
        <taxon>Catarrhini</taxon>
        <taxon>Hominidae</taxon>
        <taxon>Homo</taxon>
    </lineage>
</organism>
<protein>
    <recommendedName>
        <fullName evidence="22">Centrosomal protein of 55 kDa</fullName>
        <shortName>Cep55</shortName>
    </recommendedName>
    <alternativeName>
        <fullName>Up-regulated in colon cancer 6</fullName>
    </alternativeName>
</protein>